<dbReference type="EMBL" id="BA000012">
    <property type="protein sequence ID" value="BAB50149.1"/>
    <property type="status" value="ALT_FRAME"/>
    <property type="molecule type" value="Genomic_DNA"/>
</dbReference>
<dbReference type="SMR" id="Q98GR7"/>
<dbReference type="KEGG" id="mlo:msl3206"/>
<dbReference type="HOGENOM" id="CLU_201915_0_0_5"/>
<dbReference type="Proteomes" id="UP000000552">
    <property type="component" value="Chromosome"/>
</dbReference>
<dbReference type="CDD" id="cd21132">
    <property type="entry name" value="EVE-like"/>
    <property type="match status" value="1"/>
</dbReference>
<dbReference type="Gene3D" id="3.10.590.10">
    <property type="entry name" value="ph1033 like domains"/>
    <property type="match status" value="1"/>
</dbReference>
<dbReference type="HAMAP" id="MF_00771">
    <property type="entry name" value="UPF0310"/>
    <property type="match status" value="1"/>
</dbReference>
<dbReference type="InterPro" id="IPR002740">
    <property type="entry name" value="EVE_domain"/>
</dbReference>
<dbReference type="InterPro" id="IPR015947">
    <property type="entry name" value="PUA-like_sf"/>
</dbReference>
<dbReference type="InterPro" id="IPR022996">
    <property type="entry name" value="UPF0310"/>
</dbReference>
<dbReference type="NCBIfam" id="NF002616">
    <property type="entry name" value="PRK02268.1-2"/>
    <property type="match status" value="1"/>
</dbReference>
<dbReference type="Pfam" id="PF01878">
    <property type="entry name" value="EVE"/>
    <property type="match status" value="1"/>
</dbReference>
<dbReference type="SUPFAM" id="SSF88697">
    <property type="entry name" value="PUA domain-like"/>
    <property type="match status" value="1"/>
</dbReference>
<gene>
    <name type="ordered locus">msl3206</name>
</gene>
<reference key="1">
    <citation type="journal article" date="2000" name="DNA Res.">
        <title>Complete genome structure of the nitrogen-fixing symbiotic bacterium Mesorhizobium loti.</title>
        <authorList>
            <person name="Kaneko T."/>
            <person name="Nakamura Y."/>
            <person name="Sato S."/>
            <person name="Asamizu E."/>
            <person name="Kato T."/>
            <person name="Sasamoto S."/>
            <person name="Watanabe A."/>
            <person name="Idesawa K."/>
            <person name="Ishikawa A."/>
            <person name="Kawashima K."/>
            <person name="Kimura T."/>
            <person name="Kishida Y."/>
            <person name="Kiyokawa C."/>
            <person name="Kohara M."/>
            <person name="Matsumoto M."/>
            <person name="Matsuno A."/>
            <person name="Mochizuki Y."/>
            <person name="Nakayama S."/>
            <person name="Nakazaki N."/>
            <person name="Shimpo S."/>
            <person name="Sugimoto M."/>
            <person name="Takeuchi C."/>
            <person name="Yamada M."/>
            <person name="Tabata S."/>
        </authorList>
    </citation>
    <scope>NUCLEOTIDE SEQUENCE [LARGE SCALE GENOMIC DNA]</scope>
    <source>
        <strain>LMG 29417 / CECT 9101 / MAFF 303099</strain>
    </source>
</reference>
<accession>Q98GR7</accession>
<sequence length="149" mass="16448">MSAYWIAVASAQHVRRGRNDGFMQVNHGKAAPLRRVKPGDGIVYYSPTTILGEKDGLQAFTAIGTVRYGKESPYQGEMGGGFTPFRRDVEWAVAEEAPIKPLLDRLDFTAGKSNWGYHLRFGLFEITDHDFRLIAEAMGAPKTLAEATA</sequence>
<comment type="similarity">
    <text evidence="1">Belongs to the UPF0310 family.</text>
</comment>
<comment type="sequence caution" evidence="1">
    <conflict type="frameshift">
        <sequence resource="EMBL-CDS" id="BAB50149"/>
    </conflict>
</comment>
<proteinExistence type="inferred from homology"/>
<organism>
    <name type="scientific">Mesorhizobium japonicum (strain LMG 29417 / CECT 9101 / MAFF 303099)</name>
    <name type="common">Mesorhizobium loti (strain MAFF 303099)</name>
    <dbReference type="NCBI Taxonomy" id="266835"/>
    <lineage>
        <taxon>Bacteria</taxon>
        <taxon>Pseudomonadati</taxon>
        <taxon>Pseudomonadota</taxon>
        <taxon>Alphaproteobacteria</taxon>
        <taxon>Hyphomicrobiales</taxon>
        <taxon>Phyllobacteriaceae</taxon>
        <taxon>Mesorhizobium</taxon>
    </lineage>
</organism>
<name>Y3206_RHILO</name>
<feature type="chain" id="PRO_0000059631" description="UPF0310 protein msl3206">
    <location>
        <begin position="1"/>
        <end position="149"/>
    </location>
</feature>
<protein>
    <recommendedName>
        <fullName>UPF0310 protein msl3206</fullName>
    </recommendedName>
</protein>
<evidence type="ECO:0000305" key="1"/>